<dbReference type="EMBL" id="CP000682">
    <property type="protein sequence ID" value="ABP94833.1"/>
    <property type="molecule type" value="Genomic_DNA"/>
</dbReference>
<dbReference type="RefSeq" id="WP_012020620.1">
    <property type="nucleotide sequence ID" value="NZ_CP139956.1"/>
</dbReference>
<dbReference type="SMR" id="A4YEI1"/>
<dbReference type="STRING" id="399549.Msed_0658"/>
<dbReference type="KEGG" id="mse:Msed_0658"/>
<dbReference type="eggNOG" id="arCOG01640">
    <property type="taxonomic scope" value="Archaea"/>
</dbReference>
<dbReference type="HOGENOM" id="CLU_026663_3_1_2"/>
<dbReference type="Proteomes" id="UP000000242">
    <property type="component" value="Chromosome"/>
</dbReference>
<dbReference type="GO" id="GO:0003743">
    <property type="term" value="F:translation initiation factor activity"/>
    <property type="evidence" value="ECO:0007669"/>
    <property type="project" value="UniProtKB-UniRule"/>
</dbReference>
<dbReference type="FunFam" id="3.30.30.170:FF:000001">
    <property type="entry name" value="Eukaryotic translation initiation factor 2 subunit"/>
    <property type="match status" value="1"/>
</dbReference>
<dbReference type="Gene3D" id="3.30.30.170">
    <property type="match status" value="1"/>
</dbReference>
<dbReference type="HAMAP" id="MF_00232">
    <property type="entry name" value="eIF_2_beta"/>
    <property type="match status" value="1"/>
</dbReference>
<dbReference type="InterPro" id="IPR045196">
    <property type="entry name" value="IF2/IF5"/>
</dbReference>
<dbReference type="InterPro" id="IPR004458">
    <property type="entry name" value="TIF2_bsu_arc"/>
</dbReference>
<dbReference type="InterPro" id="IPR002735">
    <property type="entry name" value="Transl_init_fac_IF2/IF5_dom"/>
</dbReference>
<dbReference type="InterPro" id="IPR016189">
    <property type="entry name" value="Transl_init_fac_IF2/IF5_N"/>
</dbReference>
<dbReference type="InterPro" id="IPR016190">
    <property type="entry name" value="Transl_init_fac_IF2/IF5_Zn-bd"/>
</dbReference>
<dbReference type="NCBIfam" id="NF003067">
    <property type="entry name" value="PRK03988.1"/>
    <property type="match status" value="1"/>
</dbReference>
<dbReference type="PANTHER" id="PTHR23001">
    <property type="entry name" value="EUKARYOTIC TRANSLATION INITIATION FACTOR"/>
    <property type="match status" value="1"/>
</dbReference>
<dbReference type="PANTHER" id="PTHR23001:SF3">
    <property type="entry name" value="EUKARYOTIC TRANSLATION INITIATION FACTOR 2 SUBUNIT 2"/>
    <property type="match status" value="1"/>
</dbReference>
<dbReference type="Pfam" id="PF01873">
    <property type="entry name" value="eIF-5_eIF-2B"/>
    <property type="match status" value="1"/>
</dbReference>
<dbReference type="SMART" id="SM00653">
    <property type="entry name" value="eIF2B_5"/>
    <property type="match status" value="1"/>
</dbReference>
<dbReference type="SUPFAM" id="SSF100966">
    <property type="entry name" value="Translation initiation factor 2 beta, aIF2beta, N-terminal domain"/>
    <property type="match status" value="1"/>
</dbReference>
<dbReference type="SUPFAM" id="SSF75689">
    <property type="entry name" value="Zinc-binding domain of translation initiation factor 2 beta"/>
    <property type="match status" value="1"/>
</dbReference>
<reference key="1">
    <citation type="journal article" date="2008" name="Appl. Environ. Microbiol.">
        <title>The genome sequence of the metal-mobilizing, extremely thermoacidophilic archaeon Metallosphaera sedula provides insights into bioleaching-associated metabolism.</title>
        <authorList>
            <person name="Auernik K.S."/>
            <person name="Maezato Y."/>
            <person name="Blum P.H."/>
            <person name="Kelly R.M."/>
        </authorList>
    </citation>
    <scope>NUCLEOTIDE SEQUENCE [LARGE SCALE GENOMIC DNA]</scope>
    <source>
        <strain>ATCC 51363 / DSM 5348 / JCM 9185 / NBRC 15509 / TH2</strain>
    </source>
</reference>
<keyword id="KW-0396">Initiation factor</keyword>
<keyword id="KW-0648">Protein biosynthesis</keyword>
<keyword id="KW-1185">Reference proteome</keyword>
<comment type="function">
    <text evidence="1">eIF-2 functions in the early steps of protein synthesis by forming a ternary complex with GTP and initiator tRNA.</text>
</comment>
<comment type="subunit">
    <text evidence="1">Heterotrimer composed of an alpha, a beta and a gamma chain.</text>
</comment>
<comment type="similarity">
    <text evidence="1">Belongs to the eIF-2-beta/eIF-5 family.</text>
</comment>
<evidence type="ECO:0000255" key="1">
    <source>
        <dbReference type="HAMAP-Rule" id="MF_00232"/>
    </source>
</evidence>
<feature type="chain" id="PRO_0000336756" description="Translation initiation factor 2 subunit beta">
    <location>
        <begin position="1"/>
        <end position="140"/>
    </location>
</feature>
<sequence length="140" mass="16030">MSERDKLYHVLLDRLYAKLPKKDLASETQTLPTLSIINVGNTTIIRNFSEYCDRIRREDKICMRYLLKELAAAGSISENGQLMIQGKFSNAIVNTFMDRFLKTYVQCSTCKSLDTVLVKDKKIWYIQCLACGAKNPVKPL</sequence>
<gene>
    <name evidence="1" type="primary">eif2b</name>
    <name type="ordered locus">Msed_0658</name>
</gene>
<name>IF2B_METS5</name>
<proteinExistence type="inferred from homology"/>
<protein>
    <recommendedName>
        <fullName evidence="1">Translation initiation factor 2 subunit beta</fullName>
    </recommendedName>
    <alternativeName>
        <fullName evidence="1">aIF2-beta</fullName>
    </alternativeName>
    <alternativeName>
        <fullName evidence="1">eIF-2-beta</fullName>
    </alternativeName>
</protein>
<accession>A4YEI1</accession>
<organism>
    <name type="scientific">Metallosphaera sedula (strain ATCC 51363 / DSM 5348 / JCM 9185 / NBRC 15509 / TH2)</name>
    <dbReference type="NCBI Taxonomy" id="399549"/>
    <lineage>
        <taxon>Archaea</taxon>
        <taxon>Thermoproteota</taxon>
        <taxon>Thermoprotei</taxon>
        <taxon>Sulfolobales</taxon>
        <taxon>Sulfolobaceae</taxon>
        <taxon>Metallosphaera</taxon>
    </lineage>
</organism>